<proteinExistence type="inferred from homology"/>
<feature type="chain" id="PRO_1000013903" description="Ubiquinone biosynthesis O-methyltransferase">
    <location>
        <begin position="1"/>
        <end position="242"/>
    </location>
</feature>
<feature type="binding site" evidence="1">
    <location>
        <position position="44"/>
    </location>
    <ligand>
        <name>S-adenosyl-L-methionine</name>
        <dbReference type="ChEBI" id="CHEBI:59789"/>
    </ligand>
</feature>
<feature type="binding site" evidence="1">
    <location>
        <position position="64"/>
    </location>
    <ligand>
        <name>S-adenosyl-L-methionine</name>
        <dbReference type="ChEBI" id="CHEBI:59789"/>
    </ligand>
</feature>
<feature type="binding site" evidence="1">
    <location>
        <position position="85"/>
    </location>
    <ligand>
        <name>S-adenosyl-L-methionine</name>
        <dbReference type="ChEBI" id="CHEBI:59789"/>
    </ligand>
</feature>
<feature type="binding site" evidence="1">
    <location>
        <position position="129"/>
    </location>
    <ligand>
        <name>S-adenosyl-L-methionine</name>
        <dbReference type="ChEBI" id="CHEBI:59789"/>
    </ligand>
</feature>
<evidence type="ECO:0000255" key="1">
    <source>
        <dbReference type="HAMAP-Rule" id="MF_00472"/>
    </source>
</evidence>
<dbReference type="EC" id="2.1.1.222" evidence="1"/>
<dbReference type="EC" id="2.1.1.64" evidence="1"/>
<dbReference type="EMBL" id="CP000647">
    <property type="protein sequence ID" value="ABR78058.1"/>
    <property type="molecule type" value="Genomic_DNA"/>
</dbReference>
<dbReference type="RefSeq" id="WP_002913014.1">
    <property type="nucleotide sequence ID" value="NC_009648.1"/>
</dbReference>
<dbReference type="SMR" id="A6TBT7"/>
<dbReference type="STRING" id="272620.KPN_02641"/>
<dbReference type="jPOST" id="A6TBT7"/>
<dbReference type="PaxDb" id="272620-KPN_02641"/>
<dbReference type="EnsemblBacteria" id="ABR78058">
    <property type="protein sequence ID" value="ABR78058"/>
    <property type="gene ID" value="KPN_02641"/>
</dbReference>
<dbReference type="KEGG" id="kpn:KPN_02641"/>
<dbReference type="HOGENOM" id="CLU_042432_5_0_6"/>
<dbReference type="UniPathway" id="UPA00232"/>
<dbReference type="Proteomes" id="UP000000265">
    <property type="component" value="Chromosome"/>
</dbReference>
<dbReference type="GO" id="GO:0102208">
    <property type="term" value="F:2-polyprenyl-6-hydroxyphenol methylase activity"/>
    <property type="evidence" value="ECO:0007669"/>
    <property type="project" value="UniProtKB-EC"/>
</dbReference>
<dbReference type="GO" id="GO:0061542">
    <property type="term" value="F:3-demethylubiquinol 3-O-methyltransferase activity"/>
    <property type="evidence" value="ECO:0007669"/>
    <property type="project" value="UniProtKB-UniRule"/>
</dbReference>
<dbReference type="GO" id="GO:0010420">
    <property type="term" value="F:polyprenyldihydroxybenzoate methyltransferase activity"/>
    <property type="evidence" value="ECO:0007669"/>
    <property type="project" value="InterPro"/>
</dbReference>
<dbReference type="GO" id="GO:0032259">
    <property type="term" value="P:methylation"/>
    <property type="evidence" value="ECO:0007669"/>
    <property type="project" value="UniProtKB-KW"/>
</dbReference>
<dbReference type="CDD" id="cd02440">
    <property type="entry name" value="AdoMet_MTases"/>
    <property type="match status" value="1"/>
</dbReference>
<dbReference type="FunFam" id="3.40.50.150:FF:000028">
    <property type="entry name" value="Ubiquinone biosynthesis O-methyltransferase"/>
    <property type="match status" value="1"/>
</dbReference>
<dbReference type="Gene3D" id="3.40.50.150">
    <property type="entry name" value="Vaccinia Virus protein VP39"/>
    <property type="match status" value="1"/>
</dbReference>
<dbReference type="HAMAP" id="MF_00472">
    <property type="entry name" value="UbiG"/>
    <property type="match status" value="1"/>
</dbReference>
<dbReference type="InterPro" id="IPR029063">
    <property type="entry name" value="SAM-dependent_MTases_sf"/>
</dbReference>
<dbReference type="InterPro" id="IPR010233">
    <property type="entry name" value="UbiG_MeTrfase"/>
</dbReference>
<dbReference type="NCBIfam" id="TIGR01983">
    <property type="entry name" value="UbiG"/>
    <property type="match status" value="1"/>
</dbReference>
<dbReference type="PANTHER" id="PTHR43464">
    <property type="entry name" value="METHYLTRANSFERASE"/>
    <property type="match status" value="1"/>
</dbReference>
<dbReference type="PANTHER" id="PTHR43464:SF19">
    <property type="entry name" value="UBIQUINONE BIOSYNTHESIS O-METHYLTRANSFERASE, MITOCHONDRIAL"/>
    <property type="match status" value="1"/>
</dbReference>
<dbReference type="Pfam" id="PF13489">
    <property type="entry name" value="Methyltransf_23"/>
    <property type="match status" value="1"/>
</dbReference>
<dbReference type="SUPFAM" id="SSF53335">
    <property type="entry name" value="S-adenosyl-L-methionine-dependent methyltransferases"/>
    <property type="match status" value="1"/>
</dbReference>
<keyword id="KW-0489">Methyltransferase</keyword>
<keyword id="KW-0949">S-adenosyl-L-methionine</keyword>
<keyword id="KW-0808">Transferase</keyword>
<keyword id="KW-0831">Ubiquinone biosynthesis</keyword>
<reference key="1">
    <citation type="submission" date="2006-09" db="EMBL/GenBank/DDBJ databases">
        <authorList>
            <consortium name="The Klebsiella pneumonia Genome Sequencing Project"/>
            <person name="McClelland M."/>
            <person name="Sanderson E.K."/>
            <person name="Spieth J."/>
            <person name="Clifton W.S."/>
            <person name="Latreille P."/>
            <person name="Sabo A."/>
            <person name="Pepin K."/>
            <person name="Bhonagiri V."/>
            <person name="Porwollik S."/>
            <person name="Ali J."/>
            <person name="Wilson R.K."/>
        </authorList>
    </citation>
    <scope>NUCLEOTIDE SEQUENCE [LARGE SCALE GENOMIC DNA]</scope>
    <source>
        <strain>ATCC 700721 / MGH 78578</strain>
    </source>
</reference>
<name>UBIG_KLEP7</name>
<protein>
    <recommendedName>
        <fullName evidence="1">Ubiquinone biosynthesis O-methyltransferase</fullName>
    </recommendedName>
    <alternativeName>
        <fullName evidence="1">2-polyprenyl-6-hydroxyphenol methylase</fullName>
        <ecNumber evidence="1">2.1.1.222</ecNumber>
    </alternativeName>
    <alternativeName>
        <fullName evidence="1">3-demethylubiquinone 3-O-methyltransferase</fullName>
        <ecNumber evidence="1">2.1.1.64</ecNumber>
    </alternativeName>
</protein>
<accession>A6TBT7</accession>
<comment type="function">
    <text evidence="1">O-methyltransferase that catalyzes the 2 O-methylation steps in the ubiquinone biosynthetic pathway.</text>
</comment>
<comment type="catalytic activity">
    <reaction evidence="1">
        <text>a 3-demethylubiquinol + S-adenosyl-L-methionine = a ubiquinol + S-adenosyl-L-homocysteine + H(+)</text>
        <dbReference type="Rhea" id="RHEA:44380"/>
        <dbReference type="Rhea" id="RHEA-COMP:9566"/>
        <dbReference type="Rhea" id="RHEA-COMP:10914"/>
        <dbReference type="ChEBI" id="CHEBI:15378"/>
        <dbReference type="ChEBI" id="CHEBI:17976"/>
        <dbReference type="ChEBI" id="CHEBI:57856"/>
        <dbReference type="ChEBI" id="CHEBI:59789"/>
        <dbReference type="ChEBI" id="CHEBI:84422"/>
        <dbReference type="EC" id="2.1.1.64"/>
    </reaction>
</comment>
<comment type="catalytic activity">
    <reaction evidence="1">
        <text>a 3-(all-trans-polyprenyl)benzene-1,2-diol + S-adenosyl-L-methionine = a 2-methoxy-6-(all-trans-polyprenyl)phenol + S-adenosyl-L-homocysteine + H(+)</text>
        <dbReference type="Rhea" id="RHEA:31411"/>
        <dbReference type="Rhea" id="RHEA-COMP:9550"/>
        <dbReference type="Rhea" id="RHEA-COMP:9551"/>
        <dbReference type="ChEBI" id="CHEBI:15378"/>
        <dbReference type="ChEBI" id="CHEBI:57856"/>
        <dbReference type="ChEBI" id="CHEBI:59789"/>
        <dbReference type="ChEBI" id="CHEBI:62729"/>
        <dbReference type="ChEBI" id="CHEBI:62731"/>
        <dbReference type="EC" id="2.1.1.222"/>
    </reaction>
</comment>
<comment type="pathway">
    <text evidence="1">Cofactor biosynthesis; ubiquinone biosynthesis.</text>
</comment>
<comment type="similarity">
    <text evidence="1">Belongs to the methyltransferase superfamily. UbiG/COQ3 family.</text>
</comment>
<gene>
    <name evidence="1" type="primary">ubiG</name>
    <name type="ordered locus">KPN78578_25970</name>
    <name type="ORF">KPN_02641</name>
</gene>
<sequence>MNAEKTSVAPNVDHAEIAKFEAVASRWWDLEGEFKPLHRINPLRLGYIAERSGGLFGKKVLDVGCGGGILAESMAREGATVTGLDMGAEPLQVARLHALESGIQVDYVQETVEEHAAKHPQQYDVVTCMEMLEHVPDPQSVVHACARLVKPGGQVFFSTINRNGKAWLMAVVGAEYVMKMVPKGTHDVKKFIKPAELLGWVDQTTLKEQHIIGLHYNPLTNTFKLAPGVDVNYMLHTTAKQD</sequence>
<organism>
    <name type="scientific">Klebsiella pneumoniae subsp. pneumoniae (strain ATCC 700721 / MGH 78578)</name>
    <dbReference type="NCBI Taxonomy" id="272620"/>
    <lineage>
        <taxon>Bacteria</taxon>
        <taxon>Pseudomonadati</taxon>
        <taxon>Pseudomonadota</taxon>
        <taxon>Gammaproteobacteria</taxon>
        <taxon>Enterobacterales</taxon>
        <taxon>Enterobacteriaceae</taxon>
        <taxon>Klebsiella/Raoultella group</taxon>
        <taxon>Klebsiella</taxon>
        <taxon>Klebsiella pneumoniae complex</taxon>
    </lineage>
</organism>